<accession>P13752</accession>
<name>HA1A_BOVIN</name>
<feature type="signal peptide" evidence="3">
    <location>
        <begin position="1"/>
        <end position="21"/>
    </location>
</feature>
<feature type="chain" id="PRO_0000018939" description="BOLA class I histocompatibility antigen, alpha chain BL3-6">
    <location>
        <begin position="22"/>
        <end position="360"/>
    </location>
</feature>
<feature type="topological domain" description="Extracellular" evidence="3">
    <location>
        <begin position="22"/>
        <end position="308"/>
    </location>
</feature>
<feature type="transmembrane region" description="Helical" evidence="3">
    <location>
        <begin position="309"/>
        <end position="328"/>
    </location>
</feature>
<feature type="topological domain" description="Cytoplasmic" evidence="3">
    <location>
        <begin position="329"/>
        <end position="360"/>
    </location>
</feature>
<feature type="domain" description="Ig-like C1-type">
    <location>
        <begin position="206"/>
        <end position="292"/>
    </location>
</feature>
<feature type="region of interest" description="Alpha-1">
    <location>
        <begin position="22"/>
        <end position="111"/>
    </location>
</feature>
<feature type="region of interest" description="Alpha-2">
    <location>
        <begin position="112"/>
        <end position="203"/>
    </location>
</feature>
<feature type="region of interest" description="Alpha-3">
    <location>
        <begin position="204"/>
        <end position="295"/>
    </location>
</feature>
<feature type="region of interest" description="Connecting peptide">
    <location>
        <begin position="296"/>
        <end position="308"/>
    </location>
</feature>
<feature type="region of interest" description="Disordered" evidence="5">
    <location>
        <begin position="340"/>
        <end position="360"/>
    </location>
</feature>
<feature type="compositionally biased region" description="Low complexity" evidence="5">
    <location>
        <begin position="341"/>
        <end position="354"/>
    </location>
</feature>
<feature type="modified residue" description="Phosphoserine" evidence="2">
    <location>
        <position position="351"/>
    </location>
</feature>
<feature type="modified residue" description="Phosphoserine" evidence="2">
    <location>
        <position position="354"/>
    </location>
</feature>
<feature type="glycosylation site" description="N-linked (GlcNAc...) asparagine" evidence="1">
    <location>
        <position position="107"/>
    </location>
</feature>
<feature type="disulfide bond" evidence="4">
    <location>
        <begin position="122"/>
        <end position="185"/>
    </location>
</feature>
<feature type="disulfide bond" evidence="4">
    <location>
        <begin position="224"/>
        <end position="280"/>
    </location>
</feature>
<reference key="1">
    <citation type="journal article" date="1988" name="J. Immunol.">
        <title>Molecular cloning of bovine class I MHC cDNA.</title>
        <authorList>
            <person name="Ennis P.D."/>
            <person name="Jackson A.P."/>
            <person name="Parham P."/>
        </authorList>
    </citation>
    <scope>NUCLEOTIDE SEQUENCE [MRNA]</scope>
</reference>
<comment type="function">
    <text>Involved in the presentation of foreign antigens to the immune system.</text>
</comment>
<comment type="subunit">
    <text>Heterodimer of an alpha chain and a beta chain (beta-2-microglobulin).</text>
</comment>
<comment type="subcellular location">
    <subcellularLocation>
        <location>Membrane</location>
        <topology>Single-pass type I membrane protein</topology>
    </subcellularLocation>
</comment>
<comment type="similarity">
    <text evidence="6">Belongs to the MHC class I family.</text>
</comment>
<proteinExistence type="evidence at transcript level"/>
<dbReference type="EMBL" id="M21044">
    <property type="protein sequence ID" value="AAA30640.1"/>
    <property type="molecule type" value="mRNA"/>
</dbReference>
<dbReference type="PIR" id="A27638">
    <property type="entry name" value="A27638"/>
</dbReference>
<dbReference type="SMR" id="P13752"/>
<dbReference type="FunCoup" id="P13752">
    <property type="interactions" value="195"/>
</dbReference>
<dbReference type="GlyGen" id="P13752">
    <property type="glycosylation" value="1 site"/>
</dbReference>
<dbReference type="PeptideAtlas" id="P13752"/>
<dbReference type="InParanoid" id="P13752"/>
<dbReference type="Proteomes" id="UP000009136">
    <property type="component" value="Unplaced"/>
</dbReference>
<dbReference type="GO" id="GO:0009897">
    <property type="term" value="C:external side of plasma membrane"/>
    <property type="evidence" value="ECO:0000318"/>
    <property type="project" value="GO_Central"/>
</dbReference>
<dbReference type="GO" id="GO:0005615">
    <property type="term" value="C:extracellular space"/>
    <property type="evidence" value="ECO:0000318"/>
    <property type="project" value="GO_Central"/>
</dbReference>
<dbReference type="GO" id="GO:0098553">
    <property type="term" value="C:lumenal side of endoplasmic reticulum membrane"/>
    <property type="evidence" value="ECO:0007669"/>
    <property type="project" value="UniProtKB-ARBA"/>
</dbReference>
<dbReference type="GO" id="GO:0042612">
    <property type="term" value="C:MHC class I protein complex"/>
    <property type="evidence" value="ECO:0007669"/>
    <property type="project" value="UniProtKB-KW"/>
</dbReference>
<dbReference type="GO" id="GO:0030670">
    <property type="term" value="C:phagocytic vesicle membrane"/>
    <property type="evidence" value="ECO:0007669"/>
    <property type="project" value="UniProtKB-ARBA"/>
</dbReference>
<dbReference type="GO" id="GO:0042605">
    <property type="term" value="F:peptide antigen binding"/>
    <property type="evidence" value="ECO:0000318"/>
    <property type="project" value="GO_Central"/>
</dbReference>
<dbReference type="GO" id="GO:0005102">
    <property type="term" value="F:signaling receptor binding"/>
    <property type="evidence" value="ECO:0000318"/>
    <property type="project" value="GO_Central"/>
</dbReference>
<dbReference type="GO" id="GO:0002486">
    <property type="term" value="P:antigen processing and presentation of endogenous peptide antigen via MHC class I via ER pathway, TAP-independent"/>
    <property type="evidence" value="ECO:0000318"/>
    <property type="project" value="GO_Central"/>
</dbReference>
<dbReference type="GO" id="GO:0002476">
    <property type="term" value="P:antigen processing and presentation of endogenous peptide antigen via MHC class Ib"/>
    <property type="evidence" value="ECO:0000318"/>
    <property type="project" value="GO_Central"/>
</dbReference>
<dbReference type="GO" id="GO:0006955">
    <property type="term" value="P:immune response"/>
    <property type="evidence" value="ECO:0000318"/>
    <property type="project" value="GO_Central"/>
</dbReference>
<dbReference type="GO" id="GO:0001916">
    <property type="term" value="P:positive regulation of T cell mediated cytotoxicity"/>
    <property type="evidence" value="ECO:0000318"/>
    <property type="project" value="GO_Central"/>
</dbReference>
<dbReference type="CDD" id="cd07698">
    <property type="entry name" value="IgC1_MHC_I_alpha3"/>
    <property type="match status" value="1"/>
</dbReference>
<dbReference type="FunFam" id="2.60.40.10:FF:000014">
    <property type="entry name" value="H-2 class I histocompatibility antigen, alpha chain"/>
    <property type="match status" value="1"/>
</dbReference>
<dbReference type="FunFam" id="3.30.500.10:FF:000001">
    <property type="entry name" value="H-2 class I histocompatibility antigen, alpha chain"/>
    <property type="match status" value="1"/>
</dbReference>
<dbReference type="Gene3D" id="2.60.40.10">
    <property type="entry name" value="Immunoglobulins"/>
    <property type="match status" value="1"/>
</dbReference>
<dbReference type="Gene3D" id="3.30.500.10">
    <property type="entry name" value="MHC class I-like antigen recognition-like"/>
    <property type="match status" value="1"/>
</dbReference>
<dbReference type="InterPro" id="IPR007110">
    <property type="entry name" value="Ig-like_dom"/>
</dbReference>
<dbReference type="InterPro" id="IPR036179">
    <property type="entry name" value="Ig-like_dom_sf"/>
</dbReference>
<dbReference type="InterPro" id="IPR013783">
    <property type="entry name" value="Ig-like_fold"/>
</dbReference>
<dbReference type="InterPro" id="IPR003006">
    <property type="entry name" value="Ig/MHC_CS"/>
</dbReference>
<dbReference type="InterPro" id="IPR003597">
    <property type="entry name" value="Ig_C1-set"/>
</dbReference>
<dbReference type="InterPro" id="IPR050208">
    <property type="entry name" value="MHC_class-I_related"/>
</dbReference>
<dbReference type="InterPro" id="IPR011161">
    <property type="entry name" value="MHC_I-like_Ag-recog"/>
</dbReference>
<dbReference type="InterPro" id="IPR037055">
    <property type="entry name" value="MHC_I-like_Ag-recog_sf"/>
</dbReference>
<dbReference type="InterPro" id="IPR011162">
    <property type="entry name" value="MHC_I/II-like_Ag-recog"/>
</dbReference>
<dbReference type="InterPro" id="IPR001039">
    <property type="entry name" value="MHC_I_a_a1/a2"/>
</dbReference>
<dbReference type="InterPro" id="IPR010579">
    <property type="entry name" value="MHC_I_a_C"/>
</dbReference>
<dbReference type="PANTHER" id="PTHR16675:SF251">
    <property type="entry name" value="HLA CLASS I HISTOCOMPATIBILITY ANTIGEN, C ALPHA CHAIN"/>
    <property type="match status" value="1"/>
</dbReference>
<dbReference type="PANTHER" id="PTHR16675">
    <property type="entry name" value="MHC CLASS I-RELATED"/>
    <property type="match status" value="1"/>
</dbReference>
<dbReference type="Pfam" id="PF07654">
    <property type="entry name" value="C1-set"/>
    <property type="match status" value="1"/>
</dbReference>
<dbReference type="Pfam" id="PF00129">
    <property type="entry name" value="MHC_I"/>
    <property type="match status" value="1"/>
</dbReference>
<dbReference type="Pfam" id="PF06623">
    <property type="entry name" value="MHC_I_C"/>
    <property type="match status" value="1"/>
</dbReference>
<dbReference type="PRINTS" id="PR01638">
    <property type="entry name" value="MHCCLASSI"/>
</dbReference>
<dbReference type="SMART" id="SM00407">
    <property type="entry name" value="IGc1"/>
    <property type="match status" value="1"/>
</dbReference>
<dbReference type="SUPFAM" id="SSF48726">
    <property type="entry name" value="Immunoglobulin"/>
    <property type="match status" value="1"/>
</dbReference>
<dbReference type="SUPFAM" id="SSF54452">
    <property type="entry name" value="MHC antigen-recognition domain"/>
    <property type="match status" value="1"/>
</dbReference>
<dbReference type="PROSITE" id="PS50835">
    <property type="entry name" value="IG_LIKE"/>
    <property type="match status" value="1"/>
</dbReference>
<dbReference type="PROSITE" id="PS00290">
    <property type="entry name" value="IG_MHC"/>
    <property type="match status" value="1"/>
</dbReference>
<keyword id="KW-1015">Disulfide bond</keyword>
<keyword id="KW-0325">Glycoprotein</keyword>
<keyword id="KW-0391">Immunity</keyword>
<keyword id="KW-0472">Membrane</keyword>
<keyword id="KW-0490">MHC I</keyword>
<keyword id="KW-0597">Phosphoprotein</keyword>
<keyword id="KW-1185">Reference proteome</keyword>
<keyword id="KW-0732">Signal</keyword>
<keyword id="KW-0812">Transmembrane</keyword>
<keyword id="KW-1133">Transmembrane helix</keyword>
<organism>
    <name type="scientific">Bos taurus</name>
    <name type="common">Bovine</name>
    <dbReference type="NCBI Taxonomy" id="9913"/>
    <lineage>
        <taxon>Eukaryota</taxon>
        <taxon>Metazoa</taxon>
        <taxon>Chordata</taxon>
        <taxon>Craniata</taxon>
        <taxon>Vertebrata</taxon>
        <taxon>Euteleostomi</taxon>
        <taxon>Mammalia</taxon>
        <taxon>Eutheria</taxon>
        <taxon>Laurasiatheria</taxon>
        <taxon>Artiodactyla</taxon>
        <taxon>Ruminantia</taxon>
        <taxon>Pecora</taxon>
        <taxon>Bovidae</taxon>
        <taxon>Bovinae</taxon>
        <taxon>Bos</taxon>
    </lineage>
</organism>
<sequence>MGPRALLLLLSGVLILTETRAGSHSLRYFSTAVSRPGLGEPRYLEVGYVDDTQFVQFDSDAPNPRMEPRARWVEQEGPEYWDRNTRNAKGNAQSFRVNLNTLRGYYNQSEAGSHTLQWMSGCDVGPDGALRRGFMQYGYDGRDYLALNEDLRSWTAGETEAQITKRKWEAAGYAEVQRNYLEGECVEWLRRYLENGKDTLLRADPPKAHVTHHPISGREVTLRCWALGFYPEEISLTWQHDGEDQTQDMELVETRPSGDGTFQKWAALVVPSGDEQRYTCRVQHEGLQEPLTLRWEPPQPSFLTMGIIVGLVLLVVTGAVVAGVVICMKKRSGEKGGNYIQASSSDSAQGSDVSLTVPKV</sequence>
<evidence type="ECO:0000250" key="1"/>
<evidence type="ECO:0000250" key="2">
    <source>
        <dbReference type="UniProtKB" id="P01900"/>
    </source>
</evidence>
<evidence type="ECO:0000255" key="3"/>
<evidence type="ECO:0000255" key="4">
    <source>
        <dbReference type="PROSITE-ProRule" id="PRU00114"/>
    </source>
</evidence>
<evidence type="ECO:0000256" key="5">
    <source>
        <dbReference type="SAM" id="MobiDB-lite"/>
    </source>
</evidence>
<evidence type="ECO:0000305" key="6"/>
<protein>
    <recommendedName>
        <fullName>BOLA class I histocompatibility antigen, alpha chain BL3-6</fullName>
    </recommendedName>
</protein>